<gene>
    <name type="primary">SAA3</name>
</gene>
<feature type="signal peptide" evidence="2">
    <location>
        <begin position="1"/>
        <end position="18"/>
    </location>
</feature>
<feature type="chain" id="PRO_0000031598" description="Serum amyloid A-3 protein" evidence="2">
    <location>
        <begin position="19"/>
        <end position="122"/>
    </location>
</feature>
<feature type="region of interest" description="Disordered" evidence="3">
    <location>
        <begin position="88"/>
        <end position="122"/>
    </location>
</feature>
<feature type="compositionally biased region" description="Polar residues" evidence="3">
    <location>
        <begin position="99"/>
        <end position="109"/>
    </location>
</feature>
<sequence length="122" mass="13806">MKLSIGIIFCFLILGVNSREWLTFLKEAGQGAKDMWRAYSDMKEANYKNSDKYFHARGNYDAAKRGPGGVWAAEVISDARENYQKLIGRGAEDSKADQEANQWGRSGNDPNHFRPKGLPDKY</sequence>
<keyword id="KW-0011">Acute phase</keyword>
<keyword id="KW-0034">Amyloid</keyword>
<keyword id="KW-0345">HDL</keyword>
<keyword id="KW-1185">Reference proteome</keyword>
<keyword id="KW-0964">Secreted</keyword>
<keyword id="KW-0732">Signal</keyword>
<proteinExistence type="evidence at transcript level"/>
<name>SAA3_RABIT</name>
<protein>
    <recommendedName>
        <fullName>Serum amyloid A-3 protein</fullName>
    </recommendedName>
</protein>
<comment type="function">
    <text evidence="1">Major acute phase reactant. Apolipoprotein of the HDL complex. In vitro exhibits antimicrobial activity against Escherichia coli, Streptococcus uberis and Pseudomonas aeruginosa (By similarity).</text>
</comment>
<comment type="subcellular location">
    <subcellularLocation>
        <location evidence="4">Secreted</location>
    </subcellularLocation>
</comment>
<comment type="tissue specificity">
    <text evidence="4">Expressed by the liver; secreted in plasma. Expressed in synovial fibroblasts (PubMed:1849144).</text>
</comment>
<comment type="induction">
    <text evidence="4">Up-regulated by cytokine stimulation.</text>
</comment>
<comment type="disease">
    <text>Reactive, secondary amyloidosis is characterized by the extracellular accumulation in various tissues of the SAA protein. These deposits are highly insoluble and resistant to proteolysis; they disrupt tissue structure and compromise function.</text>
</comment>
<comment type="similarity">
    <text evidence="5">Belongs to the SAA family.</text>
</comment>
<organism>
    <name type="scientific">Oryctolagus cuniculus</name>
    <name type="common">Rabbit</name>
    <dbReference type="NCBI Taxonomy" id="9986"/>
    <lineage>
        <taxon>Eukaryota</taxon>
        <taxon>Metazoa</taxon>
        <taxon>Chordata</taxon>
        <taxon>Craniata</taxon>
        <taxon>Vertebrata</taxon>
        <taxon>Euteleostomi</taxon>
        <taxon>Mammalia</taxon>
        <taxon>Eutheria</taxon>
        <taxon>Euarchontoglires</taxon>
        <taxon>Glires</taxon>
        <taxon>Lagomorpha</taxon>
        <taxon>Leporidae</taxon>
        <taxon>Oryctolagus</taxon>
    </lineage>
</organism>
<reference key="1">
    <citation type="journal article" date="1991" name="J. Clin. Invest.">
        <title>Serum amyloid A (SAA3) produced by rabbit synovial fibroblasts treated with phorbol esters or interleukin 1 induces synthesis of collagenase and is neutralized with specific antiserum.</title>
        <authorList>
            <person name="Mitchell T.I."/>
            <person name="Coon C.I."/>
            <person name="Brinckerhoff C.E."/>
        </authorList>
    </citation>
    <scope>NUCLEOTIDE SEQUENCE [MRNA]</scope>
    <scope>SUBCELLULAR LOCATION</scope>
    <scope>TISSUE SPECIFICITY</scope>
    <scope>INDUCTION BY CYTOKINES</scope>
    <source>
        <tissue>Fibroblast</tissue>
    </source>
</reference>
<dbReference type="EMBL" id="M64696">
    <property type="protein sequence ID" value="AAA31464.1"/>
    <property type="molecule type" value="mRNA"/>
</dbReference>
<dbReference type="PIR" id="S32574">
    <property type="entry name" value="S32574"/>
</dbReference>
<dbReference type="RefSeq" id="NP_001075771.1">
    <property type="nucleotide sequence ID" value="NM_001082302.2"/>
</dbReference>
<dbReference type="RefSeq" id="XP_069925799.1">
    <property type="nucleotide sequence ID" value="XM_070069698.1"/>
</dbReference>
<dbReference type="SMR" id="P35543"/>
<dbReference type="FunCoup" id="P35543">
    <property type="interactions" value="161"/>
</dbReference>
<dbReference type="STRING" id="9986.ENSOCUP00000002092"/>
<dbReference type="PaxDb" id="9986-ENSOCUP00000002092"/>
<dbReference type="GeneID" id="100009138"/>
<dbReference type="KEGG" id="ocu:100009138"/>
<dbReference type="CTD" id="20210"/>
<dbReference type="eggNOG" id="ENOG502S4PB">
    <property type="taxonomic scope" value="Eukaryota"/>
</dbReference>
<dbReference type="InParanoid" id="P35543"/>
<dbReference type="OrthoDB" id="6112826at2759"/>
<dbReference type="Proteomes" id="UP000001811">
    <property type="component" value="Unplaced"/>
</dbReference>
<dbReference type="GO" id="GO:0034364">
    <property type="term" value="C:high-density lipoprotein particle"/>
    <property type="evidence" value="ECO:0007669"/>
    <property type="project" value="UniProtKB-KW"/>
</dbReference>
<dbReference type="GO" id="GO:0006953">
    <property type="term" value="P:acute-phase response"/>
    <property type="evidence" value="ECO:0007669"/>
    <property type="project" value="UniProtKB-KW"/>
</dbReference>
<dbReference type="FunFam" id="1.10.132.110:FF:000001">
    <property type="entry name" value="Serum amyloid A protein"/>
    <property type="match status" value="1"/>
</dbReference>
<dbReference type="Gene3D" id="1.10.132.110">
    <property type="entry name" value="Serum amyloid A protein"/>
    <property type="match status" value="1"/>
</dbReference>
<dbReference type="InterPro" id="IPR000096">
    <property type="entry name" value="Serum_amyloid_A"/>
</dbReference>
<dbReference type="InterPro" id="IPR052464">
    <property type="entry name" value="Synovial_Prolif_Regulator"/>
</dbReference>
<dbReference type="PANTHER" id="PTHR23424">
    <property type="entry name" value="SERUM AMYLOID A"/>
    <property type="match status" value="1"/>
</dbReference>
<dbReference type="PANTHER" id="PTHR23424:SF29">
    <property type="entry name" value="SERUM AMYLOID A PROTEIN"/>
    <property type="match status" value="1"/>
</dbReference>
<dbReference type="Pfam" id="PF00277">
    <property type="entry name" value="SAA"/>
    <property type="match status" value="1"/>
</dbReference>
<dbReference type="PIRSF" id="PIRSF002472">
    <property type="entry name" value="Serum_amyloid_A"/>
    <property type="match status" value="1"/>
</dbReference>
<dbReference type="PRINTS" id="PR00306">
    <property type="entry name" value="SERUMAMYLOID"/>
</dbReference>
<dbReference type="SMART" id="SM00197">
    <property type="entry name" value="SAA"/>
    <property type="match status" value="1"/>
</dbReference>
<dbReference type="PROSITE" id="PS00992">
    <property type="entry name" value="SAA"/>
    <property type="match status" value="1"/>
</dbReference>
<evidence type="ECO:0000250" key="1">
    <source>
        <dbReference type="UniProtKB" id="Q8SQ28"/>
    </source>
</evidence>
<evidence type="ECO:0000255" key="2"/>
<evidence type="ECO:0000256" key="3">
    <source>
        <dbReference type="SAM" id="MobiDB-lite"/>
    </source>
</evidence>
<evidence type="ECO:0000269" key="4">
    <source>
    </source>
</evidence>
<evidence type="ECO:0000305" key="5"/>
<accession>P35543</accession>